<evidence type="ECO:0000250" key="1">
    <source>
        <dbReference type="UniProtKB" id="Q50EL0"/>
    </source>
</evidence>
<evidence type="ECO:0000269" key="2">
    <source>
    </source>
</evidence>
<evidence type="ECO:0000303" key="3">
    <source>
    </source>
</evidence>
<evidence type="ECO:0000305" key="4"/>
<evidence type="ECO:0000305" key="5">
    <source>
    </source>
</evidence>
<accession>A0A0E3D8N4</accession>
<comment type="function">
    <text evidence="2 5">Indole diterpene prenyltransferase; part of the gene cluster that mediates the biosynthesis of the indole diterpenes penitrems (PubMed:26213965). The geranylgeranyl diphosphate (GGPP) synthase penG catalyzes the first step in penitrem biosynthesis via conversion of farnesyl pyrophosphate and isopentyl pyrophosphate into geranylgeranyl pyrophosphate (GGPP) (Probable). Condensation of indole-3-glycerol phosphate with GGPP by the prenyl transferase penC then forms 3-geranylgeranylindole (3-GGI) (Probable). Epoxidation by the FAD-dependent monooxygenase penM leads to a epoxidized-GGI that is substrate of the terpene cyclase penB for cyclization to yield paspaline (Probable). Paspaline is subsequently converted to 13-desoxypaxilline by the cytochrome P450 monooxygenase penP, the latter being then converted to paxilline by the cytochrome P450 monooxygenase penQ (PubMed:26213965). Paxilline is converted to beta-paxitriol via C-10 ketoreduction by the short-chain dehydrogenase PC-15 which can be monoprenylated at the C-20 by the indole diterpene prenyltransferase penD (Probable). A two-step elimination (acetylation and elimination) process performed by the O-acetyltransferase PC-16 and the P.simplicissimum ptmI-ortholog not yet identified in P.crustosum, leads to the production of the prenylated form of penijanthine (Probable). The FAD-linked oxidoreductase ptmO then converts the prenylated form of penijanthine into PC-M5 which is in turn transformed into PC-M4 by the aromatic dimethylallyltransferase PC-22 (Probable). A series of oxidation steps involving 4 cytochrome P450 monooxygenases (PC-21, PC-05, PC-23, PC-20) and a FAD-dependent monooxygenase (PC-14) are required for the transformation of PC-M4 to penitrems A and E. Synthesis of these final products is proposed to proceed via penitrems D and C (PC-21, PC-05, PC-14) and penitrems B and F (PC-21, PC-05, PC-14, PC-23) (Probable).</text>
</comment>
<comment type="pathway">
    <text evidence="5">Secondary metabolite biosynthesis.</text>
</comment>
<comment type="similarity">
    <text evidence="4">Belongs to the tryptophan dimethylallyltransferase family.</text>
</comment>
<protein>
    <recommendedName>
        <fullName evidence="3">Indole diterpene prenyltransferase penD</fullName>
        <ecNumber evidence="5">2.5.1.-</ecNumber>
    </recommendedName>
    <alternativeName>
        <fullName evidence="3">Penitrem biosynthesis cluster protein D</fullName>
    </alternativeName>
</protein>
<keyword id="KW-0808">Transferase</keyword>
<gene>
    <name evidence="3" type="primary">penD</name>
</gene>
<name>PEND_PENCR</name>
<proteinExistence type="inferred from homology"/>
<dbReference type="EC" id="2.5.1.-" evidence="5"/>
<dbReference type="EMBL" id="KC963408">
    <property type="protein sequence ID" value="AGZ20194.1"/>
    <property type="molecule type" value="Genomic_DNA"/>
</dbReference>
<dbReference type="SMR" id="A0A0E3D8N4"/>
<dbReference type="OrthoDB" id="3354387at2759"/>
<dbReference type="GO" id="GO:0016765">
    <property type="term" value="F:transferase activity, transferring alkyl or aryl (other than methyl) groups"/>
    <property type="evidence" value="ECO:0007669"/>
    <property type="project" value="InterPro"/>
</dbReference>
<dbReference type="GO" id="GO:0009820">
    <property type="term" value="P:alkaloid metabolic process"/>
    <property type="evidence" value="ECO:0007669"/>
    <property type="project" value="InterPro"/>
</dbReference>
<dbReference type="CDD" id="cd13929">
    <property type="entry name" value="PT-DMATS_CymD"/>
    <property type="match status" value="1"/>
</dbReference>
<dbReference type="InterPro" id="IPR033964">
    <property type="entry name" value="Aro_prenylTrfase"/>
</dbReference>
<dbReference type="InterPro" id="IPR017795">
    <property type="entry name" value="Aro_prenylTrfase_DMATS"/>
</dbReference>
<dbReference type="InterPro" id="IPR012148">
    <property type="entry name" value="DMATS-type_fun"/>
</dbReference>
<dbReference type="NCBIfam" id="TIGR03429">
    <property type="entry name" value="arom_pren_DMATS"/>
    <property type="match status" value="1"/>
</dbReference>
<dbReference type="PANTHER" id="PTHR40627">
    <property type="entry name" value="INDOLE PRENYLTRANSFERASE TDIB-RELATED"/>
    <property type="match status" value="1"/>
</dbReference>
<dbReference type="PANTHER" id="PTHR40627:SF3">
    <property type="entry name" value="PRENYLTRANSFERASE ASQH2-RELATED"/>
    <property type="match status" value="1"/>
</dbReference>
<dbReference type="Pfam" id="PF11991">
    <property type="entry name" value="Trp_DMAT"/>
    <property type="match status" value="1"/>
</dbReference>
<dbReference type="PIRSF" id="PIRSF000509">
    <property type="entry name" value="Trp_DMAT"/>
    <property type="match status" value="1"/>
</dbReference>
<dbReference type="SFLD" id="SFLDS00036">
    <property type="entry name" value="Aromatic_Prenyltransferase"/>
    <property type="match status" value="1"/>
</dbReference>
<organism>
    <name type="scientific">Penicillium crustosum</name>
    <name type="common">Blue mold fungus</name>
    <dbReference type="NCBI Taxonomy" id="36656"/>
    <lineage>
        <taxon>Eukaryota</taxon>
        <taxon>Fungi</taxon>
        <taxon>Dikarya</taxon>
        <taxon>Ascomycota</taxon>
        <taxon>Pezizomycotina</taxon>
        <taxon>Eurotiomycetes</taxon>
        <taxon>Eurotiomycetidae</taxon>
        <taxon>Eurotiales</taxon>
        <taxon>Aspergillaceae</taxon>
        <taxon>Penicillium</taxon>
    </lineage>
</organism>
<reference key="1">
    <citation type="journal article" date="2015" name="Toxins">
        <title>Molecular cloning and functional analysis of gene clusters for the biosynthesis of indole-diterpenes in Penicillium crustosum and P. janthinellum.</title>
        <authorList>
            <person name="Nicholson M.J."/>
            <person name="Eaton C.J."/>
            <person name="Starkel C."/>
            <person name="Tapper B.A."/>
            <person name="Cox M.P."/>
            <person name="Scott B."/>
        </authorList>
    </citation>
    <scope>NUCLEOTIDE SEQUENCE [GENOMIC DNA]</scope>
    <scope>IDENTIFICATION</scope>
    <scope>FUNCTION</scope>
    <scope>PATHWAY</scope>
    <source>
        <strain>PN2402</strain>
    </source>
</reference>
<feature type="chain" id="PRO_0000446558" description="Indole diterpene prenyltransferase penD">
    <location>
        <begin position="1"/>
        <end position="427"/>
    </location>
</feature>
<feature type="binding site" evidence="1">
    <location>
        <begin position="77"/>
        <end position="78"/>
    </location>
    <ligand>
        <name>L-tryptophan</name>
        <dbReference type="ChEBI" id="CHEBI:57912"/>
    </ligand>
</feature>
<feature type="binding site" evidence="1">
    <location>
        <position position="99"/>
    </location>
    <ligand>
        <name>substrate</name>
    </ligand>
</feature>
<feature type="binding site" evidence="1">
    <location>
        <position position="186"/>
    </location>
    <ligand>
        <name>substrate</name>
    </ligand>
</feature>
<feature type="binding site" evidence="1">
    <location>
        <position position="188"/>
    </location>
    <ligand>
        <name>substrate</name>
    </ligand>
</feature>
<feature type="binding site" evidence="1">
    <location>
        <position position="259"/>
    </location>
    <ligand>
        <name>substrate</name>
    </ligand>
</feature>
<feature type="binding site" evidence="1">
    <location>
        <position position="261"/>
    </location>
    <ligand>
        <name>substrate</name>
    </ligand>
</feature>
<feature type="binding site" evidence="1">
    <location>
        <position position="263"/>
    </location>
    <ligand>
        <name>substrate</name>
    </ligand>
</feature>
<feature type="binding site" evidence="1">
    <location>
        <position position="344"/>
    </location>
    <ligand>
        <name>substrate</name>
    </ligand>
</feature>
<feature type="binding site" evidence="1">
    <location>
        <position position="409"/>
    </location>
    <ligand>
        <name>substrate</name>
    </ligand>
</feature>
<feature type="binding site" evidence="1">
    <location>
        <position position="413"/>
    </location>
    <ligand>
        <name>substrate</name>
    </ligand>
</feature>
<sequence>MTNSLLNNGDMVQGVELPDADQQFWWDSLAPILSRMLQCSKYSVQSQANILSFFKDFIVPSYGPRPSIDGEFFWKSYVTYNHTPGQVSFNFHKNKCTVRLSNVPTAPLAGTASDPFNQKGVVQTIKHIQKALPGMDMTIFDYFSEAFLVADEDTVGLDARKPVPQYNQLVVASMLGYDFEPVPRVKVYFNPRWKALQMNIENHDLIWTAINNLGSPIKSYKRTLDLLQECGNPRQPGGWIFQPEFISFDMGENMSNTARLKLYGFTTKTCWSHIESIYTLDRRLDDAETQRGLAVLKRLWHLALSIPEDHDENQDLPPCPHLTAGVIYNYELRENSAKPEAKIYIPVRFYGSGDGKVIEGLVDFFKSEGWDELATSYQRDFVSVFSTPDGKMVGEHHDISFSYKNDHPYVTAYYRPELIRPMERHIV</sequence>